<proteinExistence type="inferred from homology"/>
<gene>
    <name evidence="1" type="primary">mgsA</name>
    <name type="ordered locus">ECUMN_1153</name>
</gene>
<accession>B7N3C6</accession>
<name>MGSA_ECOLU</name>
<protein>
    <recommendedName>
        <fullName evidence="1">Methylglyoxal synthase</fullName>
        <shortName evidence="1">MGS</shortName>
        <ecNumber evidence="1">4.2.3.3</ecNumber>
    </recommendedName>
</protein>
<organism>
    <name type="scientific">Escherichia coli O17:K52:H18 (strain UMN026 / ExPEC)</name>
    <dbReference type="NCBI Taxonomy" id="585056"/>
    <lineage>
        <taxon>Bacteria</taxon>
        <taxon>Pseudomonadati</taxon>
        <taxon>Pseudomonadota</taxon>
        <taxon>Gammaproteobacteria</taxon>
        <taxon>Enterobacterales</taxon>
        <taxon>Enterobacteriaceae</taxon>
        <taxon>Escherichia</taxon>
    </lineage>
</organism>
<feature type="chain" id="PRO_1000128991" description="Methylglyoxal synthase">
    <location>
        <begin position="1"/>
        <end position="152"/>
    </location>
</feature>
<feature type="domain" description="MGS-like" evidence="1">
    <location>
        <begin position="6"/>
        <end position="152"/>
    </location>
</feature>
<feature type="active site" description="Proton donor/acceptor" evidence="1">
    <location>
        <position position="71"/>
    </location>
</feature>
<feature type="binding site" evidence="1">
    <location>
        <position position="19"/>
    </location>
    <ligand>
        <name>substrate</name>
    </ligand>
</feature>
<feature type="binding site" evidence="1">
    <location>
        <position position="23"/>
    </location>
    <ligand>
        <name>substrate</name>
    </ligand>
</feature>
<feature type="binding site" evidence="1">
    <location>
        <begin position="45"/>
        <end position="48"/>
    </location>
    <ligand>
        <name>substrate</name>
    </ligand>
</feature>
<feature type="binding site" evidence="1">
    <location>
        <begin position="65"/>
        <end position="66"/>
    </location>
    <ligand>
        <name>substrate</name>
    </ligand>
</feature>
<feature type="binding site" evidence="1">
    <location>
        <position position="98"/>
    </location>
    <ligand>
        <name>substrate</name>
    </ligand>
</feature>
<evidence type="ECO:0000255" key="1">
    <source>
        <dbReference type="HAMAP-Rule" id="MF_00549"/>
    </source>
</evidence>
<keyword id="KW-0456">Lyase</keyword>
<comment type="function">
    <text evidence="1">Catalyzes the formation of methylglyoxal from dihydroxyacetone phosphate.</text>
</comment>
<comment type="catalytic activity">
    <reaction evidence="1">
        <text>dihydroxyacetone phosphate = methylglyoxal + phosphate</text>
        <dbReference type="Rhea" id="RHEA:17937"/>
        <dbReference type="ChEBI" id="CHEBI:17158"/>
        <dbReference type="ChEBI" id="CHEBI:43474"/>
        <dbReference type="ChEBI" id="CHEBI:57642"/>
        <dbReference type="EC" id="4.2.3.3"/>
    </reaction>
</comment>
<comment type="similarity">
    <text evidence="1">Belongs to the methylglyoxal synthase family.</text>
</comment>
<dbReference type="EC" id="4.2.3.3" evidence="1"/>
<dbReference type="EMBL" id="CU928163">
    <property type="protein sequence ID" value="CAR12362.1"/>
    <property type="molecule type" value="Genomic_DNA"/>
</dbReference>
<dbReference type="RefSeq" id="WP_001309396.1">
    <property type="nucleotide sequence ID" value="NC_011751.1"/>
</dbReference>
<dbReference type="RefSeq" id="YP_002411906.1">
    <property type="nucleotide sequence ID" value="NC_011751.1"/>
</dbReference>
<dbReference type="SMR" id="B7N3C6"/>
<dbReference type="STRING" id="585056.ECUMN_1153"/>
<dbReference type="KEGG" id="eum:ECUMN_1153"/>
<dbReference type="PATRIC" id="fig|585056.7.peg.1349"/>
<dbReference type="HOGENOM" id="CLU_120420_0_1_6"/>
<dbReference type="Proteomes" id="UP000007097">
    <property type="component" value="Chromosome"/>
</dbReference>
<dbReference type="GO" id="GO:0005829">
    <property type="term" value="C:cytosol"/>
    <property type="evidence" value="ECO:0007669"/>
    <property type="project" value="TreeGrafter"/>
</dbReference>
<dbReference type="GO" id="GO:0008929">
    <property type="term" value="F:methylglyoxal synthase activity"/>
    <property type="evidence" value="ECO:0007669"/>
    <property type="project" value="UniProtKB-UniRule"/>
</dbReference>
<dbReference type="GO" id="GO:0019242">
    <property type="term" value="P:methylglyoxal biosynthetic process"/>
    <property type="evidence" value="ECO:0007669"/>
    <property type="project" value="UniProtKB-UniRule"/>
</dbReference>
<dbReference type="CDD" id="cd01422">
    <property type="entry name" value="MGS"/>
    <property type="match status" value="1"/>
</dbReference>
<dbReference type="FunFam" id="3.40.50.1380:FF:000002">
    <property type="entry name" value="Methylglyoxal synthase"/>
    <property type="match status" value="1"/>
</dbReference>
<dbReference type="Gene3D" id="3.40.50.1380">
    <property type="entry name" value="Methylglyoxal synthase-like domain"/>
    <property type="match status" value="1"/>
</dbReference>
<dbReference type="HAMAP" id="MF_00549">
    <property type="entry name" value="Methylglyoxal_synth"/>
    <property type="match status" value="1"/>
</dbReference>
<dbReference type="InterPro" id="IPR004363">
    <property type="entry name" value="Methylgl_synth"/>
</dbReference>
<dbReference type="InterPro" id="IPR018148">
    <property type="entry name" value="Methylglyoxal_synth_AS"/>
</dbReference>
<dbReference type="InterPro" id="IPR011607">
    <property type="entry name" value="MGS-like_dom"/>
</dbReference>
<dbReference type="InterPro" id="IPR036914">
    <property type="entry name" value="MGS-like_dom_sf"/>
</dbReference>
<dbReference type="NCBIfam" id="TIGR00160">
    <property type="entry name" value="MGSA"/>
    <property type="match status" value="1"/>
</dbReference>
<dbReference type="NCBIfam" id="NF003559">
    <property type="entry name" value="PRK05234.1"/>
    <property type="match status" value="1"/>
</dbReference>
<dbReference type="PANTHER" id="PTHR30492">
    <property type="entry name" value="METHYLGLYOXAL SYNTHASE"/>
    <property type="match status" value="1"/>
</dbReference>
<dbReference type="PANTHER" id="PTHR30492:SF0">
    <property type="entry name" value="METHYLGLYOXAL SYNTHASE"/>
    <property type="match status" value="1"/>
</dbReference>
<dbReference type="Pfam" id="PF02142">
    <property type="entry name" value="MGS"/>
    <property type="match status" value="1"/>
</dbReference>
<dbReference type="PIRSF" id="PIRSF006614">
    <property type="entry name" value="Methylglyox_syn"/>
    <property type="match status" value="1"/>
</dbReference>
<dbReference type="SMART" id="SM00851">
    <property type="entry name" value="MGS"/>
    <property type="match status" value="1"/>
</dbReference>
<dbReference type="SUPFAM" id="SSF52335">
    <property type="entry name" value="Methylglyoxal synthase-like"/>
    <property type="match status" value="1"/>
</dbReference>
<dbReference type="PROSITE" id="PS01335">
    <property type="entry name" value="METHYLGLYOXAL_SYNTH"/>
    <property type="match status" value="1"/>
</dbReference>
<dbReference type="PROSITE" id="PS51855">
    <property type="entry name" value="MGS"/>
    <property type="match status" value="1"/>
</dbReference>
<sequence length="152" mass="16949">MELTTRTLPARKHIALVAHDHCKQMLMSWVERHQPLLEQHVLYATGTTGNLISRATSMNVNAMLSGPMGGDQQVGALISEGKIDVLIFFWDPLNAVPHDPDVKALLRLATVWNIPVATNVATADFIIQSPHFNDAVDILIPDYQRYLADRLK</sequence>
<reference key="1">
    <citation type="journal article" date="2009" name="PLoS Genet.">
        <title>Organised genome dynamics in the Escherichia coli species results in highly diverse adaptive paths.</title>
        <authorList>
            <person name="Touchon M."/>
            <person name="Hoede C."/>
            <person name="Tenaillon O."/>
            <person name="Barbe V."/>
            <person name="Baeriswyl S."/>
            <person name="Bidet P."/>
            <person name="Bingen E."/>
            <person name="Bonacorsi S."/>
            <person name="Bouchier C."/>
            <person name="Bouvet O."/>
            <person name="Calteau A."/>
            <person name="Chiapello H."/>
            <person name="Clermont O."/>
            <person name="Cruveiller S."/>
            <person name="Danchin A."/>
            <person name="Diard M."/>
            <person name="Dossat C."/>
            <person name="Karoui M.E."/>
            <person name="Frapy E."/>
            <person name="Garry L."/>
            <person name="Ghigo J.M."/>
            <person name="Gilles A.M."/>
            <person name="Johnson J."/>
            <person name="Le Bouguenec C."/>
            <person name="Lescat M."/>
            <person name="Mangenot S."/>
            <person name="Martinez-Jehanne V."/>
            <person name="Matic I."/>
            <person name="Nassif X."/>
            <person name="Oztas S."/>
            <person name="Petit M.A."/>
            <person name="Pichon C."/>
            <person name="Rouy Z."/>
            <person name="Ruf C.S."/>
            <person name="Schneider D."/>
            <person name="Tourret J."/>
            <person name="Vacherie B."/>
            <person name="Vallenet D."/>
            <person name="Medigue C."/>
            <person name="Rocha E.P.C."/>
            <person name="Denamur E."/>
        </authorList>
    </citation>
    <scope>NUCLEOTIDE SEQUENCE [LARGE SCALE GENOMIC DNA]</scope>
    <source>
        <strain>UMN026 / ExPEC</strain>
    </source>
</reference>